<keyword id="KW-0687">Ribonucleoprotein</keyword>
<keyword id="KW-0689">Ribosomal protein</keyword>
<keyword id="KW-0694">RNA-binding</keyword>
<keyword id="KW-0699">rRNA-binding</keyword>
<evidence type="ECO:0000255" key="1">
    <source>
        <dbReference type="HAMAP-Rule" id="MF_01309"/>
    </source>
</evidence>
<evidence type="ECO:0000256" key="2">
    <source>
        <dbReference type="SAM" id="MobiDB-lite"/>
    </source>
</evidence>
<evidence type="ECO:0000305" key="3"/>
<gene>
    <name evidence="1" type="primary">rpsC</name>
    <name type="ordered locus">Dgeo_1861</name>
</gene>
<feature type="chain" id="PRO_0000293781" description="Small ribosomal subunit protein uS3">
    <location>
        <begin position="1"/>
        <end position="248"/>
    </location>
</feature>
<feature type="domain" description="KH type-2" evidence="1">
    <location>
        <begin position="39"/>
        <end position="108"/>
    </location>
</feature>
<feature type="region of interest" description="Disordered" evidence="2">
    <location>
        <begin position="212"/>
        <end position="248"/>
    </location>
</feature>
<feature type="compositionally biased region" description="Basic and acidic residues" evidence="2">
    <location>
        <begin position="221"/>
        <end position="234"/>
    </location>
</feature>
<feature type="compositionally biased region" description="Basic residues" evidence="2">
    <location>
        <begin position="235"/>
        <end position="248"/>
    </location>
</feature>
<protein>
    <recommendedName>
        <fullName evidence="1">Small ribosomal subunit protein uS3</fullName>
    </recommendedName>
    <alternativeName>
        <fullName evidence="3">30S ribosomal protein S3</fullName>
    </alternativeName>
</protein>
<sequence>MGNKINPNGFRLGITKGWNSRWYAGKKQYSQLLKEDEKIRKLVSQKLAAAGIARIEIERAGQQVNVIISAAKPGIVIGKGGESIKQLRGEIERLVSAGTVAVNVAEIPNPNISAPLVALRIAEQIERRFAFRRAMKQAAQRVMESGARGVKVILSGRLGGAEQARTEKVLEGRVPLHTLRADIDYGTARAETTYGSLGIKVLVFNGEVIGGKTETLARPPRKSDERRREDGERPSRRRPTARRRPGGE</sequence>
<dbReference type="EMBL" id="CP000359">
    <property type="protein sequence ID" value="ABF46156.1"/>
    <property type="molecule type" value="Genomic_DNA"/>
</dbReference>
<dbReference type="RefSeq" id="WP_011530986.1">
    <property type="nucleotide sequence ID" value="NC_008025.1"/>
</dbReference>
<dbReference type="SMR" id="Q1IX78"/>
<dbReference type="STRING" id="319795.Dgeo_1861"/>
<dbReference type="KEGG" id="dge:Dgeo_1861"/>
<dbReference type="eggNOG" id="COG0092">
    <property type="taxonomic scope" value="Bacteria"/>
</dbReference>
<dbReference type="HOGENOM" id="CLU_058591_0_2_0"/>
<dbReference type="Proteomes" id="UP000002431">
    <property type="component" value="Chromosome"/>
</dbReference>
<dbReference type="GO" id="GO:0022627">
    <property type="term" value="C:cytosolic small ribosomal subunit"/>
    <property type="evidence" value="ECO:0007669"/>
    <property type="project" value="TreeGrafter"/>
</dbReference>
<dbReference type="GO" id="GO:0003729">
    <property type="term" value="F:mRNA binding"/>
    <property type="evidence" value="ECO:0007669"/>
    <property type="project" value="UniProtKB-UniRule"/>
</dbReference>
<dbReference type="GO" id="GO:0019843">
    <property type="term" value="F:rRNA binding"/>
    <property type="evidence" value="ECO:0007669"/>
    <property type="project" value="UniProtKB-UniRule"/>
</dbReference>
<dbReference type="GO" id="GO:0003735">
    <property type="term" value="F:structural constituent of ribosome"/>
    <property type="evidence" value="ECO:0007669"/>
    <property type="project" value="InterPro"/>
</dbReference>
<dbReference type="GO" id="GO:0006412">
    <property type="term" value="P:translation"/>
    <property type="evidence" value="ECO:0007669"/>
    <property type="project" value="UniProtKB-UniRule"/>
</dbReference>
<dbReference type="CDD" id="cd02412">
    <property type="entry name" value="KH-II_30S_S3"/>
    <property type="match status" value="1"/>
</dbReference>
<dbReference type="FunFam" id="3.30.300.20:FF:000001">
    <property type="entry name" value="30S ribosomal protein S3"/>
    <property type="match status" value="1"/>
</dbReference>
<dbReference type="Gene3D" id="3.30.300.20">
    <property type="match status" value="1"/>
</dbReference>
<dbReference type="Gene3D" id="3.30.1140.32">
    <property type="entry name" value="Ribosomal protein S3, C-terminal domain"/>
    <property type="match status" value="1"/>
</dbReference>
<dbReference type="HAMAP" id="MF_01309_B">
    <property type="entry name" value="Ribosomal_uS3_B"/>
    <property type="match status" value="1"/>
</dbReference>
<dbReference type="InterPro" id="IPR015946">
    <property type="entry name" value="KH_dom-like_a/b"/>
</dbReference>
<dbReference type="InterPro" id="IPR004044">
    <property type="entry name" value="KH_dom_type_2"/>
</dbReference>
<dbReference type="InterPro" id="IPR009019">
    <property type="entry name" value="KH_sf_prok-type"/>
</dbReference>
<dbReference type="InterPro" id="IPR036419">
    <property type="entry name" value="Ribosomal_S3_C_sf"/>
</dbReference>
<dbReference type="InterPro" id="IPR005704">
    <property type="entry name" value="Ribosomal_uS3_bac-typ"/>
</dbReference>
<dbReference type="InterPro" id="IPR001351">
    <property type="entry name" value="Ribosomal_uS3_C"/>
</dbReference>
<dbReference type="InterPro" id="IPR018280">
    <property type="entry name" value="Ribosomal_uS3_CS"/>
</dbReference>
<dbReference type="NCBIfam" id="TIGR01009">
    <property type="entry name" value="rpsC_bact"/>
    <property type="match status" value="1"/>
</dbReference>
<dbReference type="PANTHER" id="PTHR11760">
    <property type="entry name" value="30S/40S RIBOSOMAL PROTEIN S3"/>
    <property type="match status" value="1"/>
</dbReference>
<dbReference type="PANTHER" id="PTHR11760:SF19">
    <property type="entry name" value="SMALL RIBOSOMAL SUBUNIT PROTEIN US3C"/>
    <property type="match status" value="1"/>
</dbReference>
<dbReference type="Pfam" id="PF07650">
    <property type="entry name" value="KH_2"/>
    <property type="match status" value="1"/>
</dbReference>
<dbReference type="Pfam" id="PF00189">
    <property type="entry name" value="Ribosomal_S3_C"/>
    <property type="match status" value="1"/>
</dbReference>
<dbReference type="SUPFAM" id="SSF54814">
    <property type="entry name" value="Prokaryotic type KH domain (KH-domain type II)"/>
    <property type="match status" value="1"/>
</dbReference>
<dbReference type="SUPFAM" id="SSF54821">
    <property type="entry name" value="Ribosomal protein S3 C-terminal domain"/>
    <property type="match status" value="1"/>
</dbReference>
<dbReference type="PROSITE" id="PS50823">
    <property type="entry name" value="KH_TYPE_2"/>
    <property type="match status" value="1"/>
</dbReference>
<dbReference type="PROSITE" id="PS00548">
    <property type="entry name" value="RIBOSOMAL_S3"/>
    <property type="match status" value="1"/>
</dbReference>
<name>RS3_DEIGD</name>
<reference key="1">
    <citation type="submission" date="2006-04" db="EMBL/GenBank/DDBJ databases">
        <title>Complete sequence of chromosome of Deinococcus geothermalis DSM 11300.</title>
        <authorList>
            <person name="Copeland A."/>
            <person name="Lucas S."/>
            <person name="Lapidus A."/>
            <person name="Barry K."/>
            <person name="Detter J.C."/>
            <person name="Glavina del Rio T."/>
            <person name="Hammon N."/>
            <person name="Israni S."/>
            <person name="Dalin E."/>
            <person name="Tice H."/>
            <person name="Pitluck S."/>
            <person name="Brettin T."/>
            <person name="Bruce D."/>
            <person name="Han C."/>
            <person name="Tapia R."/>
            <person name="Saunders E."/>
            <person name="Gilna P."/>
            <person name="Schmutz J."/>
            <person name="Larimer F."/>
            <person name="Land M."/>
            <person name="Hauser L."/>
            <person name="Kyrpides N."/>
            <person name="Kim E."/>
            <person name="Daly M.J."/>
            <person name="Fredrickson J.K."/>
            <person name="Makarova K.S."/>
            <person name="Gaidamakova E.K."/>
            <person name="Zhai M."/>
            <person name="Richardson P."/>
        </authorList>
    </citation>
    <scope>NUCLEOTIDE SEQUENCE [LARGE SCALE GENOMIC DNA]</scope>
    <source>
        <strain>DSM 11300 / CIP 105573 / AG-3a</strain>
    </source>
</reference>
<accession>Q1IX78</accession>
<organism>
    <name type="scientific">Deinococcus geothermalis (strain DSM 11300 / CIP 105573 / AG-3a)</name>
    <dbReference type="NCBI Taxonomy" id="319795"/>
    <lineage>
        <taxon>Bacteria</taxon>
        <taxon>Thermotogati</taxon>
        <taxon>Deinococcota</taxon>
        <taxon>Deinococci</taxon>
        <taxon>Deinococcales</taxon>
        <taxon>Deinococcaceae</taxon>
        <taxon>Deinococcus</taxon>
    </lineage>
</organism>
<proteinExistence type="inferred from homology"/>
<comment type="function">
    <text evidence="1">Binds the lower part of the 30S subunit head. Binds mRNA in the 70S ribosome, positioning it for translation.</text>
</comment>
<comment type="subunit">
    <text evidence="1">Part of the 30S ribosomal subunit. Forms a tight complex with proteins S10 and S14.</text>
</comment>
<comment type="similarity">
    <text evidence="1">Belongs to the universal ribosomal protein uS3 family.</text>
</comment>